<gene>
    <name evidence="10" type="primary">traA</name>
</gene>
<evidence type="ECO:0000250" key="1">
    <source>
        <dbReference type="UniProtKB" id="A0A0E0RXA7"/>
    </source>
</evidence>
<evidence type="ECO:0000250" key="2">
    <source>
        <dbReference type="UniProtKB" id="A0A161CKG1"/>
    </source>
</evidence>
<evidence type="ECO:0000255" key="3"/>
<evidence type="ECO:0000255" key="4">
    <source>
        <dbReference type="PROSITE-ProRule" id="PRU00258"/>
    </source>
</evidence>
<evidence type="ECO:0000255" key="5">
    <source>
        <dbReference type="PROSITE-ProRule" id="PRU01348"/>
    </source>
</evidence>
<evidence type="ECO:0000255" key="6">
    <source>
        <dbReference type="PROSITE-ProRule" id="PRU01363"/>
    </source>
</evidence>
<evidence type="ECO:0000256" key="7">
    <source>
        <dbReference type="SAM" id="MobiDB-lite"/>
    </source>
</evidence>
<evidence type="ECO:0000269" key="8">
    <source>
    </source>
</evidence>
<evidence type="ECO:0000269" key="9">
    <source>
    </source>
</evidence>
<evidence type="ECO:0000303" key="10">
    <source>
    </source>
</evidence>
<evidence type="ECO:0000305" key="11"/>
<evidence type="ECO:0000305" key="12">
    <source>
    </source>
</evidence>
<protein>
    <recommendedName>
        <fullName evidence="10">Hybrid PKS-NRPS synthetase traA</fullName>
        <ecNumber evidence="12">2.3.1.-</ecNumber>
        <ecNumber evidence="12">6.3.2.-</ecNumber>
    </recommendedName>
    <alternativeName>
        <fullName evidence="10">Terrestric acid biosynthesis cluster protein A</fullName>
    </alternativeName>
</protein>
<accession>A0A481WNP4</accession>
<feature type="chain" id="PRO_0000455070" description="Hybrid PKS-NRPS synthetase traA">
    <location>
        <begin position="1"/>
        <end position="3856"/>
    </location>
</feature>
<feature type="domain" description="Ketosynthase family 3 (KS3)" evidence="5 12">
    <location>
        <begin position="6"/>
        <end position="438"/>
    </location>
</feature>
<feature type="domain" description="PKS/mFAS DH" evidence="6">
    <location>
        <begin position="943"/>
        <end position="1249"/>
    </location>
</feature>
<feature type="domain" description="Carrier 1" evidence="4">
    <location>
        <begin position="2266"/>
        <end position="2347"/>
    </location>
</feature>
<feature type="domain" description="Carrier 2" evidence="4">
    <location>
        <begin position="3428"/>
        <end position="3507"/>
    </location>
</feature>
<feature type="region of interest" description="Malonyl-CoA:ACP transacylase (MAT) domain" evidence="3 12">
    <location>
        <begin position="554"/>
        <end position="885"/>
    </location>
</feature>
<feature type="region of interest" description="Dehydratase (DH) domain" evidence="3 12">
    <location>
        <begin position="943"/>
        <end position="1247"/>
    </location>
</feature>
<feature type="region of interest" description="N-terminal hotdog fold" evidence="6">
    <location>
        <begin position="943"/>
        <end position="1081"/>
    </location>
</feature>
<feature type="region of interest" description="C-terminal hotdog fold" evidence="6">
    <location>
        <begin position="1096"/>
        <end position="1249"/>
    </location>
</feature>
<feature type="region of interest" description="Methyltransferase (MT) domain" evidence="3 12">
    <location>
        <begin position="1290"/>
        <end position="1456"/>
    </location>
</feature>
<feature type="region of interest" description="Ketoreductase (KR) domain" evidence="3 12">
    <location>
        <begin position="1984"/>
        <end position="2158"/>
    </location>
</feature>
<feature type="region of interest" description="Disordered" evidence="7">
    <location>
        <begin position="2351"/>
        <end position="2422"/>
    </location>
</feature>
<feature type="region of interest" description="Condensation (C) domain" evidence="3 12">
    <location>
        <begin position="2446"/>
        <end position="2884"/>
    </location>
</feature>
<feature type="region of interest" description="Adenylation (A) domain" evidence="3 12">
    <location>
        <begin position="2910"/>
        <end position="3310"/>
    </location>
</feature>
<feature type="region of interest" description="Disordered" evidence="7">
    <location>
        <begin position="3403"/>
        <end position="3429"/>
    </location>
</feature>
<feature type="region of interest" description="Reductase (R) domain" evidence="3 12">
    <location>
        <begin position="3544"/>
        <end position="3768"/>
    </location>
</feature>
<feature type="compositionally biased region" description="Low complexity" evidence="7">
    <location>
        <begin position="2357"/>
        <end position="2369"/>
    </location>
</feature>
<feature type="compositionally biased region" description="Low complexity" evidence="7">
    <location>
        <begin position="2399"/>
        <end position="2418"/>
    </location>
</feature>
<feature type="active site" description="For beta-ketoacyl synthase activity" evidence="5">
    <location>
        <position position="179"/>
    </location>
</feature>
<feature type="active site" description="For beta-ketoacyl synthase activity" evidence="5">
    <location>
        <position position="318"/>
    </location>
</feature>
<feature type="active site" description="For beta-ketoacyl synthase activity" evidence="5">
    <location>
        <position position="358"/>
    </location>
</feature>
<feature type="active site" description="Proton acceptor; for dehydratase activity" evidence="6">
    <location>
        <position position="975"/>
    </location>
</feature>
<feature type="active site" description="Proton donor; for dehydratase activity" evidence="6">
    <location>
        <position position="1156"/>
    </location>
</feature>
<feature type="modified residue" description="O-(pantetheine 4'-phosphoryl)serine" evidence="4">
    <location>
        <position position="2307"/>
    </location>
</feature>
<feature type="modified residue" description="O-(pantetheine 4'-phosphoryl)serine" evidence="4">
    <location>
        <position position="3467"/>
    </location>
</feature>
<proteinExistence type="inferred from homology"/>
<dbReference type="EC" id="2.3.1.-" evidence="12"/>
<dbReference type="EC" id="6.3.2.-" evidence="12"/>
<dbReference type="EMBL" id="MK360919">
    <property type="protein sequence ID" value="QBK15049.1"/>
    <property type="molecule type" value="Genomic_DNA"/>
</dbReference>
<dbReference type="SMR" id="A0A481WNP4"/>
<dbReference type="GO" id="GO:0004315">
    <property type="term" value="F:3-oxoacyl-[acyl-carrier-protein] synthase activity"/>
    <property type="evidence" value="ECO:0007669"/>
    <property type="project" value="InterPro"/>
</dbReference>
<dbReference type="GO" id="GO:0004312">
    <property type="term" value="F:fatty acid synthase activity"/>
    <property type="evidence" value="ECO:0007669"/>
    <property type="project" value="TreeGrafter"/>
</dbReference>
<dbReference type="GO" id="GO:0016874">
    <property type="term" value="F:ligase activity"/>
    <property type="evidence" value="ECO:0007669"/>
    <property type="project" value="UniProtKB-KW"/>
</dbReference>
<dbReference type="GO" id="GO:0008168">
    <property type="term" value="F:methyltransferase activity"/>
    <property type="evidence" value="ECO:0007669"/>
    <property type="project" value="UniProtKB-KW"/>
</dbReference>
<dbReference type="GO" id="GO:0016491">
    <property type="term" value="F:oxidoreductase activity"/>
    <property type="evidence" value="ECO:0007669"/>
    <property type="project" value="UniProtKB-KW"/>
</dbReference>
<dbReference type="GO" id="GO:0031177">
    <property type="term" value="F:phosphopantetheine binding"/>
    <property type="evidence" value="ECO:0007669"/>
    <property type="project" value="InterPro"/>
</dbReference>
<dbReference type="GO" id="GO:0006633">
    <property type="term" value="P:fatty acid biosynthetic process"/>
    <property type="evidence" value="ECO:0007669"/>
    <property type="project" value="InterPro"/>
</dbReference>
<dbReference type="GO" id="GO:1901336">
    <property type="term" value="P:lactone biosynthetic process"/>
    <property type="evidence" value="ECO:0007669"/>
    <property type="project" value="UniProtKB-ARBA"/>
</dbReference>
<dbReference type="GO" id="GO:0032259">
    <property type="term" value="P:methylation"/>
    <property type="evidence" value="ECO:0007669"/>
    <property type="project" value="UniProtKB-KW"/>
</dbReference>
<dbReference type="GO" id="GO:0030639">
    <property type="term" value="P:polyketide biosynthetic process"/>
    <property type="evidence" value="ECO:0007669"/>
    <property type="project" value="UniProtKB-ARBA"/>
</dbReference>
<dbReference type="GO" id="GO:0009403">
    <property type="term" value="P:toxin biosynthetic process"/>
    <property type="evidence" value="ECO:0007669"/>
    <property type="project" value="UniProtKB-ARBA"/>
</dbReference>
<dbReference type="CDD" id="cd05930">
    <property type="entry name" value="A_NRPS"/>
    <property type="match status" value="1"/>
</dbReference>
<dbReference type="CDD" id="cd02440">
    <property type="entry name" value="AdoMet_MTases"/>
    <property type="match status" value="1"/>
</dbReference>
<dbReference type="CDD" id="cd19532">
    <property type="entry name" value="C_PKS-NRPS"/>
    <property type="match status" value="1"/>
</dbReference>
<dbReference type="CDD" id="cd00833">
    <property type="entry name" value="PKS"/>
    <property type="match status" value="1"/>
</dbReference>
<dbReference type="FunFam" id="3.40.47.10:FF:000019">
    <property type="entry name" value="Polyketide synthase type I"/>
    <property type="match status" value="1"/>
</dbReference>
<dbReference type="Gene3D" id="3.30.300.30">
    <property type="match status" value="1"/>
</dbReference>
<dbReference type="Gene3D" id="3.40.47.10">
    <property type="match status" value="1"/>
</dbReference>
<dbReference type="Gene3D" id="1.10.1200.10">
    <property type="entry name" value="ACP-like"/>
    <property type="match status" value="2"/>
</dbReference>
<dbReference type="Gene3D" id="3.30.559.10">
    <property type="entry name" value="Chloramphenicol acetyltransferase-like domain"/>
    <property type="match status" value="1"/>
</dbReference>
<dbReference type="Gene3D" id="3.40.366.10">
    <property type="entry name" value="Malonyl-Coenzyme A Acyl Carrier Protein, domain 2"/>
    <property type="match status" value="1"/>
</dbReference>
<dbReference type="Gene3D" id="3.40.50.12780">
    <property type="entry name" value="N-terminal domain of ligase-like"/>
    <property type="match status" value="1"/>
</dbReference>
<dbReference type="Gene3D" id="3.40.50.720">
    <property type="entry name" value="NAD(P)-binding Rossmann-like Domain"/>
    <property type="match status" value="3"/>
</dbReference>
<dbReference type="Gene3D" id="3.30.559.30">
    <property type="entry name" value="Nonribosomal peptide synthetase, condensation domain"/>
    <property type="match status" value="1"/>
</dbReference>
<dbReference type="Gene3D" id="3.10.129.110">
    <property type="entry name" value="Polyketide synthase dehydratase"/>
    <property type="match status" value="1"/>
</dbReference>
<dbReference type="Gene3D" id="3.40.50.150">
    <property type="entry name" value="Vaccinia Virus protein VP39"/>
    <property type="match status" value="1"/>
</dbReference>
<dbReference type="InterPro" id="IPR001227">
    <property type="entry name" value="Ac_transferase_dom_sf"/>
</dbReference>
<dbReference type="InterPro" id="IPR036736">
    <property type="entry name" value="ACP-like_sf"/>
</dbReference>
<dbReference type="InterPro" id="IPR014043">
    <property type="entry name" value="Acyl_transferase_dom"/>
</dbReference>
<dbReference type="InterPro" id="IPR016035">
    <property type="entry name" value="Acyl_Trfase/lysoPLipase"/>
</dbReference>
<dbReference type="InterPro" id="IPR045851">
    <property type="entry name" value="AMP-bd_C_sf"/>
</dbReference>
<dbReference type="InterPro" id="IPR020845">
    <property type="entry name" value="AMP-binding_CS"/>
</dbReference>
<dbReference type="InterPro" id="IPR000873">
    <property type="entry name" value="AMP-dep_synth/lig_dom"/>
</dbReference>
<dbReference type="InterPro" id="IPR042099">
    <property type="entry name" value="ANL_N_sf"/>
</dbReference>
<dbReference type="InterPro" id="IPR023213">
    <property type="entry name" value="CAT-like_dom_sf"/>
</dbReference>
<dbReference type="InterPro" id="IPR001242">
    <property type="entry name" value="Condensatn"/>
</dbReference>
<dbReference type="InterPro" id="IPR013120">
    <property type="entry name" value="Far_NAD-bd"/>
</dbReference>
<dbReference type="InterPro" id="IPR018201">
    <property type="entry name" value="Ketoacyl_synth_AS"/>
</dbReference>
<dbReference type="InterPro" id="IPR014031">
    <property type="entry name" value="Ketoacyl_synth_C"/>
</dbReference>
<dbReference type="InterPro" id="IPR014030">
    <property type="entry name" value="Ketoacyl_synth_N"/>
</dbReference>
<dbReference type="InterPro" id="IPR016036">
    <property type="entry name" value="Malonyl_transacylase_ACP-bd"/>
</dbReference>
<dbReference type="InterPro" id="IPR013217">
    <property type="entry name" value="Methyltransf_12"/>
</dbReference>
<dbReference type="InterPro" id="IPR036291">
    <property type="entry name" value="NAD(P)-bd_dom_sf"/>
</dbReference>
<dbReference type="InterPro" id="IPR032821">
    <property type="entry name" value="PKS_assoc"/>
</dbReference>
<dbReference type="InterPro" id="IPR020841">
    <property type="entry name" value="PKS_Beta-ketoAc_synthase_dom"/>
</dbReference>
<dbReference type="InterPro" id="IPR042104">
    <property type="entry name" value="PKS_dehydratase_sf"/>
</dbReference>
<dbReference type="InterPro" id="IPR020807">
    <property type="entry name" value="PKS_DH"/>
</dbReference>
<dbReference type="InterPro" id="IPR049551">
    <property type="entry name" value="PKS_DH_C"/>
</dbReference>
<dbReference type="InterPro" id="IPR049552">
    <property type="entry name" value="PKS_DH_N"/>
</dbReference>
<dbReference type="InterPro" id="IPR013968">
    <property type="entry name" value="PKS_KR"/>
</dbReference>
<dbReference type="InterPro" id="IPR049900">
    <property type="entry name" value="PKS_mFAS_DH"/>
</dbReference>
<dbReference type="InterPro" id="IPR050091">
    <property type="entry name" value="PKS_NRPS_Biosynth_Enz"/>
</dbReference>
<dbReference type="InterPro" id="IPR020806">
    <property type="entry name" value="PKS_PP-bd"/>
</dbReference>
<dbReference type="InterPro" id="IPR009081">
    <property type="entry name" value="PP-bd_ACP"/>
</dbReference>
<dbReference type="InterPro" id="IPR006162">
    <property type="entry name" value="Ppantetheine_attach_site"/>
</dbReference>
<dbReference type="InterPro" id="IPR029063">
    <property type="entry name" value="SAM-dependent_MTases_sf"/>
</dbReference>
<dbReference type="InterPro" id="IPR016039">
    <property type="entry name" value="Thiolase-like"/>
</dbReference>
<dbReference type="PANTHER" id="PTHR43775">
    <property type="entry name" value="FATTY ACID SYNTHASE"/>
    <property type="match status" value="1"/>
</dbReference>
<dbReference type="PANTHER" id="PTHR43775:SF37">
    <property type="entry name" value="SI:DKEY-61P9.11"/>
    <property type="match status" value="1"/>
</dbReference>
<dbReference type="Pfam" id="PF00698">
    <property type="entry name" value="Acyl_transf_1"/>
    <property type="match status" value="1"/>
</dbReference>
<dbReference type="Pfam" id="PF00501">
    <property type="entry name" value="AMP-binding"/>
    <property type="match status" value="1"/>
</dbReference>
<dbReference type="Pfam" id="PF00668">
    <property type="entry name" value="Condensation"/>
    <property type="match status" value="1"/>
</dbReference>
<dbReference type="Pfam" id="PF16197">
    <property type="entry name" value="KAsynt_C_assoc"/>
    <property type="match status" value="1"/>
</dbReference>
<dbReference type="Pfam" id="PF00109">
    <property type="entry name" value="ketoacyl-synt"/>
    <property type="match status" value="1"/>
</dbReference>
<dbReference type="Pfam" id="PF02801">
    <property type="entry name" value="Ketoacyl-synt_C"/>
    <property type="match status" value="1"/>
</dbReference>
<dbReference type="Pfam" id="PF08659">
    <property type="entry name" value="KR"/>
    <property type="match status" value="1"/>
</dbReference>
<dbReference type="Pfam" id="PF08242">
    <property type="entry name" value="Methyltransf_12"/>
    <property type="match status" value="1"/>
</dbReference>
<dbReference type="Pfam" id="PF07993">
    <property type="entry name" value="NAD_binding_4"/>
    <property type="match status" value="1"/>
</dbReference>
<dbReference type="Pfam" id="PF21089">
    <property type="entry name" value="PKS_DH_N"/>
    <property type="match status" value="1"/>
</dbReference>
<dbReference type="Pfam" id="PF00550">
    <property type="entry name" value="PP-binding"/>
    <property type="match status" value="2"/>
</dbReference>
<dbReference type="Pfam" id="PF14765">
    <property type="entry name" value="PS-DH"/>
    <property type="match status" value="1"/>
</dbReference>
<dbReference type="SMART" id="SM00827">
    <property type="entry name" value="PKS_AT"/>
    <property type="match status" value="1"/>
</dbReference>
<dbReference type="SMART" id="SM00826">
    <property type="entry name" value="PKS_DH"/>
    <property type="match status" value="1"/>
</dbReference>
<dbReference type="SMART" id="SM00822">
    <property type="entry name" value="PKS_KR"/>
    <property type="match status" value="1"/>
</dbReference>
<dbReference type="SMART" id="SM00825">
    <property type="entry name" value="PKS_KS"/>
    <property type="match status" value="1"/>
</dbReference>
<dbReference type="SMART" id="SM00823">
    <property type="entry name" value="PKS_PP"/>
    <property type="match status" value="2"/>
</dbReference>
<dbReference type="SUPFAM" id="SSF56801">
    <property type="entry name" value="Acetyl-CoA synthetase-like"/>
    <property type="match status" value="1"/>
</dbReference>
<dbReference type="SUPFAM" id="SSF47336">
    <property type="entry name" value="ACP-like"/>
    <property type="match status" value="2"/>
</dbReference>
<dbReference type="SUPFAM" id="SSF52777">
    <property type="entry name" value="CoA-dependent acyltransferases"/>
    <property type="match status" value="2"/>
</dbReference>
<dbReference type="SUPFAM" id="SSF52151">
    <property type="entry name" value="FabD/lysophospholipase-like"/>
    <property type="match status" value="1"/>
</dbReference>
<dbReference type="SUPFAM" id="SSF51735">
    <property type="entry name" value="NAD(P)-binding Rossmann-fold domains"/>
    <property type="match status" value="2"/>
</dbReference>
<dbReference type="SUPFAM" id="SSF55048">
    <property type="entry name" value="Probable ACP-binding domain of malonyl-CoA ACP transacylase"/>
    <property type="match status" value="1"/>
</dbReference>
<dbReference type="SUPFAM" id="SSF53335">
    <property type="entry name" value="S-adenosyl-L-methionine-dependent methyltransferases"/>
    <property type="match status" value="1"/>
</dbReference>
<dbReference type="SUPFAM" id="SSF53901">
    <property type="entry name" value="Thiolase-like"/>
    <property type="match status" value="1"/>
</dbReference>
<dbReference type="PROSITE" id="PS00455">
    <property type="entry name" value="AMP_BINDING"/>
    <property type="match status" value="1"/>
</dbReference>
<dbReference type="PROSITE" id="PS50075">
    <property type="entry name" value="CARRIER"/>
    <property type="match status" value="2"/>
</dbReference>
<dbReference type="PROSITE" id="PS00606">
    <property type="entry name" value="KS3_1"/>
    <property type="match status" value="1"/>
</dbReference>
<dbReference type="PROSITE" id="PS52004">
    <property type="entry name" value="KS3_2"/>
    <property type="match status" value="1"/>
</dbReference>
<dbReference type="PROSITE" id="PS00012">
    <property type="entry name" value="PHOSPHOPANTETHEINE"/>
    <property type="match status" value="1"/>
</dbReference>
<dbReference type="PROSITE" id="PS52019">
    <property type="entry name" value="PKS_MFAS_DH"/>
    <property type="match status" value="1"/>
</dbReference>
<name>TRAA_PENCR</name>
<organism>
    <name type="scientific">Penicillium crustosum</name>
    <name type="common">Blue mold fungus</name>
    <dbReference type="NCBI Taxonomy" id="36656"/>
    <lineage>
        <taxon>Eukaryota</taxon>
        <taxon>Fungi</taxon>
        <taxon>Dikarya</taxon>
        <taxon>Ascomycota</taxon>
        <taxon>Pezizomycotina</taxon>
        <taxon>Eurotiomycetes</taxon>
        <taxon>Eurotiomycetidae</taxon>
        <taxon>Eurotiales</taxon>
        <taxon>Aspergillaceae</taxon>
        <taxon>Penicillium</taxon>
    </lineage>
</organism>
<reference key="1">
    <citation type="journal article" date="2019" name="J. Am. Chem. Soc.">
        <title>Peniphenone and penilactone formation in Penicillium crustosum via 1,4-Michael additions of ortho-quinone methide from hydroxyclavatol to gamma-butyrolactones from Crustosic Acid.</title>
        <authorList>
            <person name="Fan J."/>
            <person name="Liao G."/>
            <person name="Kindinger F."/>
            <person name="Ludwig-Radtke L."/>
            <person name="Yin W.B."/>
            <person name="Li S.M."/>
        </authorList>
    </citation>
    <scope>NUCLEOTIDE SEQUENCE [GENOMIC DNA]</scope>
    <scope>FUNCTION</scope>
    <scope>DISRUPTION PHENOTYPE</scope>
    <scope>DOMAIN</scope>
    <scope>PATHWAY</scope>
    <source>
        <strain>PRB-2</strain>
    </source>
</reference>
<reference key="2">
    <citation type="journal article" date="2020" name="J. Org. Chem.">
        <title>Increasing Structural Diversity of Natural Products by Michael Addition with ortho-Quinone Methide as the Acceptor.</title>
        <authorList>
            <person name="Liao G."/>
            <person name="Fan J."/>
            <person name="Ludwig-Radtke L."/>
            <person name="Backhaus K."/>
            <person name="Li S.M."/>
        </authorList>
    </citation>
    <scope>FUNCTION</scope>
</reference>
<sequence length="3856" mass="420817">MVLPQPEPIAIVGSGCRFPGSSSSPSSLWDLLEKPRDVSKEPTNERFELRGYYHPNGAHHGTMNVQRAYMLDEDVGTFDATFFNISPNEAESIDPQQRLLMEVVYEALEAGGHRLDILRGSDTAVYVGTMSVDYNDIMLRDINSIPTYFSTGTSRAILANRISYFFDWHGPSMTIDTACSSSMVALHQSVQALRSGESRVAIAGGTELLLGPEQFVGESKMNLLSPTGQSRMWDASANGYARGDGIAAIVLKKLSDAIADGDHIECLIRQTGINQDGKSTGLTVPSSAAQADLIRSTYTKGGLDIDNPRDWPQFFEAHGTGTKAGDPREASAISQCFGSQPIHGNPLYVGSIKTIIGHTEGTAGLAGVFKASLAIQHGIIPPNMLLHQLNDEVAQYCDNLRVPNAPTAWPKLPDGVPRRASVNSFGFGGTNGHAILEEYQPPTETRNTATTGRDENNASVFRIFPFSAASEESLTANLRAYATSLKTRTTVDLVDLAWTLQSRRSALPFKTSLTAECIEGLITKIDSTLEKAKANSGLKVGTRSAPTKPKVLGIFTGQGAQWATMAAGLIRTSETVRRKIEQLDGSLATLPEANRPTWRIADQLCADAEDSRLNEAALSQPLCTAIQVVLIDLLRSSGITFEAVVGHSSGEIAAAYAADYISAHDAIRIAYYRGVYAKHARGPKDQKGAMMAVGTTWEDAEELLNLPAFRGRVKIAAQNSAASLTLSGDVEALSHAKRVFDEEKKFTRLLVVDTAYHSHHMLLCSERYIHSLRTCGIQVNYNRNTSCTWYSSVKHGEPMHPEPSLGDLYWNDNMVNTVLFADAVKGAAKGSQLNLAIEVGPHPALKGPALQTLSDFEMSLPYTGVLKRKGNDLEAFSDALGFVWTHCGPGAVDFQTYEELIYPACKTPSLAIGLPAYQWDHKRVYWYQSRLAKKTQTRGEAFHELLGVPSPNNTDRDLRWSNFLKTNEIPWLNGHQLQGQTVFPAAGYVAMALEAGLKLAQGRSVKVLQIDDLTIDKAVTFDDGANFAVETLVALTGVTQGQSRTKKQTADFAVYSCANTGSSTELGVVSRGKVTVIYGTPSFSTLHSSPHNEKNMVDIQAEQFYSSLHELGYGYNGPFKTLSSTKRTLNQASARVETYGYGEDENTLIVHPTMLDVAFQASFLARMSPGDDQLWSLHVPTFIKCIRVNPELCASIPSSPTSLSLSAVLHESDSLSMLSSVDVFTEDGQETMIQVEGLSMKPFSPATADDDRSMFSTTVYGSMSPDLAMDVGNGRPPSEGLAFSQCNVALACVAQQIVHRYPHAKILEIGAGEGHATRAVLESIGSKLSYTFTDSSTEVIEKAAESFKDFKEKVLLKTFDPLGKPSSQGLDEHAYDLVIASNILASNSVSHTELENIRRLLKPGGYLLASGLTGDAPTRTLGGGTVEGNDARKHGPVNTAQWHGALRKAGFSGIDSITPQTSGMASPFSAIVTQAVDKRINFLRKPLSTPSFVRLDELVIVGNQSLKAAQLTEEIYDHLIQFCGKITVLDGLPTDDDDISSMATFINLADIHEPIFRDISAEQFEGLKCLFELASNILWVTEGARADEPYHNASIGFGRSIAYEMPHLSLQFLDLNDTGSTASRVISEAVLRLVALREWEETEHNFKDKTLWSREPELYVEKERLMVPRLLQVDDQNDRINSLRRVVTKMVDPDNSSVLISKAVDGSFVLREEVLRQSGQNFVQIKHSVLSAINVAPEAFLFLGAGFSQVTDEVVITLSDANASMSTPLAHVPAQWHTGGLSTLISAVARQLLARRLISMVVAHSHLLVHGLDENESFVSILKQHAGLKDIDIKFSAANPAANSEWIQVTPWTSSHVTRQSIPATTTHFLDLSADDKNQDAAVIIREALPVICKHIGVSDLFRPESFVPAGSKDSILRALQDAVREAKTTASSEIPSASIRPTELIDATVLKSPLSVVDWTVDGEVPVQVQPIDATQLFSQHKTYVLVGLSGRLGQSISQWMSQNGAGCICLTSRTPKADPEWQAEMEKKGTTVKLIPMDVTNRADVERVFADLRANSPPIAGVASGAAVFHDATFSEMTHEILEKVMNPKVVGTKNLDEVLGDTKLDFFIVFSSLTSVVGNSGQSNYTAANAYMTGLVGQRRKRGLAATSLDIGSIVGIGYLERASDTAREQLIRNGFMAVSETDLHQLLAEAIRAGATNSSASPMVTTGCRNVQEGEEFPVPWIDDPRMQHKVILGEHSSKAEMAGKKSALPVRDQLAVSKSTADALEILKELSECFAAKLAMISRLADGQVGHDIPLVELGIDSLVAVEVRGWFLKELKTDIPVLKVLGGGTVATLCQQALEKLPESILPNVESGGPSKTGSSKPTAKPSVAKPRSPPSPSGSETGSPGRWSENNTTSPQSTLSSDQSPSSTPATVLSNVPSNVDLTTVAKSEMALIPSSDFVKTELVSFQQSRFWFLGLLIDDQATFNVTFYLRITGNLRTGDLERAVRLVTNRHESLRTCFVAHEQEADLAYQKVLPNSLVRLKRKNINRVEDVDIEYAAMKQVPFDLASGNLMRLVLLTLSASEHYLLFNYHHILMDGVSLQNFLADLEKAYQRQPLGPPPCQVPEFSRVQRAAFESGVFNEDIAYWKNEFPNGHPVLPLLPMSHITSRMALNSFNVHQVECRVDSELMAKVREAARVNGCTTFHFYLATFKAMLFRFTDAGDLTIGIADANRISPDVEGTIGLLLNLLTLRFQRNPSQTFAQSVGEARGKALEALKHSNVPFDILLKELNVPRSSAYSPFFQAFFDYRQGHQEKLSFGSTEFEFLQVHPGRTAYDMTLDVTDGADSARILFRTQASLYDKTAAQLLLNTFIHLLDTFATNTSLKLDDFALFSDKELKLALNVGHGPNFESSWPGGTIPHRIDQIAKENDDKVALKDGHGTILTYGAMINRTQAIAAALQQVGVGESSRVLVFEDATVDWPCSMLAIMRLGAVYVPLDLRNPLPRLADVAGSCKPVAILVDSTTLDHVAQVNVTFAEVVNVSEVGVNSIKVANVSRSDAVAALLYTSGSTGKPKGIVVTHSGLRNEIEGYTSQWVLKAERVLQQSAFTFNHSSDQIYTGLVNGGFVYIVPWDKRGDPIEVTKIIKEENITYTKATPAEYSLWLDYGSGNLKQASSWRFAFGGGESLTGTITRSLATLQLPNLRFFNSYGPTEISISSTKMEVAYRDSPPDGRIPCGFMLPNYAAYILDDQRKPVPVGMPGELYIGGAGVSLGYLDNEELTEQHFLPNPYAIPEYVAQGWTRMYRTGDIAHLQGDGAMVFHNRIAGDTQVKIRGLRIELGDIESNIIKAAEGALKEVAVTLRDGDPPILVAHVVFAPHHHIVDTEAFLVQLLKNLDVPQYMVPVMAIPLERMPLSNHSKTDRKALKELPLPQRSNHDTGDNTESLTETMLELRRLWVDVLNTGELGLDIGPSTSFFTVGGNSLLIVRLQSRIRQTFNVTVRLFDLIDANTLSDMTQKIEESLNVDLIDWDKETALLSDFTMPEATKHQPLKTTDKVILVTGSGGFLGKHILTELIARPDVSKIHCIGLRDKPGNTPRRLALNSTKIITHSGDLTEPWLGLGEEKFASLTLEVDVILHMAATRSFWDNYSLLRPINVTPTKLLVQMATGRKIPIHYVSSAGVVSAEGVEILAGSAAKYQPRVDGSNGYVASRWASEQILEHAVSALDVPVSIHRFVPAKEPANQTVVVDALQHFVSFVDELSIMPDFSGTTGHFEMTPIHSAASQLAENLVKTPTQQSSLLEFVHHDCPIRIDIAEMVAFLEEQRGGKGLEKVPGLKFVGDMKRAGLAYFVTSQTLLMGGTNGTSVVLESRR</sequence>
<comment type="function">
    <text evidence="1 2 8 9">Hybrid PKS-NRPS synthetase; part of the tra gene cluster that produces terrestric acid (PubMed:30811183). The clavatol biosynthesis cluster cla and the terrestric acid cluster tra are both involved in the production of peniphenones and penilactones (PubMed:30811183). The non-reducing PKS claF is responsible for the formation of clavatol from successive condensations of 3 malonyl-CoA units, presumably with a simple acetyl-CoA starter unit, and 2 methylation steps (PubMed:30811183). The esterase claE probably collaborates with claF by catalyzing the hydrolysis of ACP-bound acyl intermediates to free the ACP from stalled intermediates (By similarity). The clavatol oxidase claD then converts clavatol to hydroxyclavatol (PubMed:30811183). Spontaneous dehydration of hydroxyclavatol leads to the accumulation of the highly active ortho-quinone methide (PubMed:30811183, PubMed:31860310). On the other hand, the PKS-NRPS hybrid traA is involved in the formation of crustosic acid, with the help of traB and traD (PubMed:30811183). The polyketide synthase module (PKS) of traA is responsible for the synthesis of the polyketide backbone via the condensation of an acetyl-CoA starter unit with 3 malonyl-CoA units (PubMed:30811183). The downstream nonribosomal peptide synthetase (NRPS) module then amidates the carboxyl end of the polyketide with L-malic acid (PubMed:30811183). Because traA lacks a designated enoylreductase (ER) domain, the required activity is provided the enoyl reductase traG (By similarity). Crustosic acid undergoes decarboxylation and isomerization to the terrestric acid, catalyzed by the 2-oxoglutarate-dependent dioxygenase traH (PubMed:30811183). Both acids are further converted to the 2 gamma-butyrolactones (R)-5-methyltetronic acid and (S)-5-carboxylmethyltetronic acid, with involvement of the cytochrome P450 monooxygenase claJ (PubMed:30811183). Spontaneous addition of the methide to these gamma-butyrolactones leads to peniphenone D and penilactone D, which undergo again stereospecific attacking by methide to give penilactones A and B (PubMed:30811183, PubMed:31860310).</text>
</comment>
<comment type="pathway">
    <text evidence="8">Secondary metabolite biosynthesis.</text>
</comment>
<comment type="domain">
    <text evidence="12">NRP synthetases are composed of discrete domains (adenylation (A), thiolation (T) or peptidyl carrier protein (PCP) and condensation (C) domains) which when grouped together are referred to as a single module. Each module is responsible for the recognition (via the A domain) and incorporation of a single amino acid into the growing peptide product. Thus, an NRP synthetase is generally composed of one or more modules and can terminate in a thioesterase domain (TE) that releases the newly synthesized peptide from the enzyme (Probable). TraA also contains a polyketide synthase module (PKS) consisting of several catalytic domains including a ketoacyl synthase domain (KS), an acyl transferase domain (AT), a dehydratase domain (DH), a methyltransferase domain (MT), and a ketoreductase domain (KR) (Probable). Instead of a thioesterase domain (TE), traA finishes with a reductase-like domain (R) for peptide release. TraA has the following architecture: KS-AT-DH-KR-PCP-C-A-T-R (Probable).</text>
</comment>
<comment type="disruption phenotype">
    <text evidence="8">Completely abolishes the production of peniphenone D, penilactone D, penilactone A and penilactone B, as well as of crustosic acid and tarrestric acid (PubMed:30811183). Leads to the accumulation of clavatol, hydroxyclavatol and hydroxyclavatol methyl ether (PubMed:30811183).</text>
</comment>
<comment type="similarity">
    <text evidence="11">In the C-terminal section; belongs to the NRP synthetase family.</text>
</comment>
<keyword id="KW-0436">Ligase</keyword>
<keyword id="KW-0489">Methyltransferase</keyword>
<keyword id="KW-0511">Multifunctional enzyme</keyword>
<keyword id="KW-0560">Oxidoreductase</keyword>
<keyword id="KW-0596">Phosphopantetheine</keyword>
<keyword id="KW-0597">Phosphoprotein</keyword>
<keyword id="KW-0677">Repeat</keyword>
<keyword id="KW-0808">Transferase</keyword>